<reference key="1">
    <citation type="journal article" date="2005" name="Nat. Biotechnol.">
        <title>Complete genome sequence of the plant commensal Pseudomonas fluorescens Pf-5.</title>
        <authorList>
            <person name="Paulsen I.T."/>
            <person name="Press C.M."/>
            <person name="Ravel J."/>
            <person name="Kobayashi D.Y."/>
            <person name="Myers G.S.A."/>
            <person name="Mavrodi D.V."/>
            <person name="DeBoy R.T."/>
            <person name="Seshadri R."/>
            <person name="Ren Q."/>
            <person name="Madupu R."/>
            <person name="Dodson R.J."/>
            <person name="Durkin A.S."/>
            <person name="Brinkac L.M."/>
            <person name="Daugherty S.C."/>
            <person name="Sullivan S.A."/>
            <person name="Rosovitz M.J."/>
            <person name="Gwinn M.L."/>
            <person name="Zhou L."/>
            <person name="Schneider D.J."/>
            <person name="Cartinhour S.W."/>
            <person name="Nelson W.C."/>
            <person name="Weidman J."/>
            <person name="Watkins K."/>
            <person name="Tran K."/>
            <person name="Khouri H."/>
            <person name="Pierson E.A."/>
            <person name="Pierson L.S. III"/>
            <person name="Thomashow L.S."/>
            <person name="Loper J.E."/>
        </authorList>
    </citation>
    <scope>NUCLEOTIDE SEQUENCE [LARGE SCALE GENOMIC DNA]</scope>
    <source>
        <strain>ATCC BAA-477 / NRRL B-23932 / Pf-5</strain>
    </source>
</reference>
<name>GATB_PSEF5</name>
<accession>Q4KIA9</accession>
<dbReference type="EC" id="6.3.5.-" evidence="1"/>
<dbReference type="EMBL" id="CP000076">
    <property type="protein sequence ID" value="AAY90180.1"/>
    <property type="molecule type" value="Genomic_DNA"/>
</dbReference>
<dbReference type="RefSeq" id="WP_011059248.1">
    <property type="nucleotide sequence ID" value="NC_004129.6"/>
</dbReference>
<dbReference type="SMR" id="Q4KIA9"/>
<dbReference type="STRING" id="220664.PFL_0893"/>
<dbReference type="KEGG" id="pfl:PFL_0893"/>
<dbReference type="PATRIC" id="fig|220664.5.peg.915"/>
<dbReference type="eggNOG" id="COG0064">
    <property type="taxonomic scope" value="Bacteria"/>
</dbReference>
<dbReference type="HOGENOM" id="CLU_019240_0_0_6"/>
<dbReference type="Proteomes" id="UP000008540">
    <property type="component" value="Chromosome"/>
</dbReference>
<dbReference type="GO" id="GO:0050566">
    <property type="term" value="F:asparaginyl-tRNA synthase (glutamine-hydrolyzing) activity"/>
    <property type="evidence" value="ECO:0007669"/>
    <property type="project" value="RHEA"/>
</dbReference>
<dbReference type="GO" id="GO:0005524">
    <property type="term" value="F:ATP binding"/>
    <property type="evidence" value="ECO:0007669"/>
    <property type="project" value="UniProtKB-KW"/>
</dbReference>
<dbReference type="GO" id="GO:0050567">
    <property type="term" value="F:glutaminyl-tRNA synthase (glutamine-hydrolyzing) activity"/>
    <property type="evidence" value="ECO:0007669"/>
    <property type="project" value="UniProtKB-UniRule"/>
</dbReference>
<dbReference type="GO" id="GO:0070681">
    <property type="term" value="P:glutaminyl-tRNAGln biosynthesis via transamidation"/>
    <property type="evidence" value="ECO:0007669"/>
    <property type="project" value="TreeGrafter"/>
</dbReference>
<dbReference type="GO" id="GO:0006412">
    <property type="term" value="P:translation"/>
    <property type="evidence" value="ECO:0007669"/>
    <property type="project" value="UniProtKB-UniRule"/>
</dbReference>
<dbReference type="FunFam" id="1.10.10.410:FF:000001">
    <property type="entry name" value="Aspartyl/glutamyl-tRNA(Asn/Gln) amidotransferase subunit B"/>
    <property type="match status" value="1"/>
</dbReference>
<dbReference type="FunFam" id="1.10.150.380:FF:000001">
    <property type="entry name" value="Aspartyl/glutamyl-tRNA(Asn/Gln) amidotransferase subunit B"/>
    <property type="match status" value="1"/>
</dbReference>
<dbReference type="Gene3D" id="1.10.10.410">
    <property type="match status" value="1"/>
</dbReference>
<dbReference type="Gene3D" id="1.10.150.380">
    <property type="entry name" value="GatB domain, N-terminal subdomain"/>
    <property type="match status" value="1"/>
</dbReference>
<dbReference type="HAMAP" id="MF_00121">
    <property type="entry name" value="GatB"/>
    <property type="match status" value="1"/>
</dbReference>
<dbReference type="InterPro" id="IPR017959">
    <property type="entry name" value="Asn/Gln-tRNA_amidoTrfase_suB/E"/>
</dbReference>
<dbReference type="InterPro" id="IPR006075">
    <property type="entry name" value="Asn/Gln-tRNA_Trfase_suB/E_cat"/>
</dbReference>
<dbReference type="InterPro" id="IPR018027">
    <property type="entry name" value="Asn/Gln_amidotransferase"/>
</dbReference>
<dbReference type="InterPro" id="IPR003789">
    <property type="entry name" value="Asn/Gln_tRNA_amidoTrase-B-like"/>
</dbReference>
<dbReference type="InterPro" id="IPR004413">
    <property type="entry name" value="GatB"/>
</dbReference>
<dbReference type="InterPro" id="IPR042114">
    <property type="entry name" value="GatB_C_1"/>
</dbReference>
<dbReference type="InterPro" id="IPR023168">
    <property type="entry name" value="GatB_Yqey_C_2"/>
</dbReference>
<dbReference type="InterPro" id="IPR017958">
    <property type="entry name" value="Gln-tRNA_amidoTrfase_suB_CS"/>
</dbReference>
<dbReference type="InterPro" id="IPR014746">
    <property type="entry name" value="Gln_synth/guanido_kin_cat_dom"/>
</dbReference>
<dbReference type="NCBIfam" id="TIGR00133">
    <property type="entry name" value="gatB"/>
    <property type="match status" value="1"/>
</dbReference>
<dbReference type="NCBIfam" id="NF004012">
    <property type="entry name" value="PRK05477.1-2"/>
    <property type="match status" value="1"/>
</dbReference>
<dbReference type="NCBIfam" id="NF004014">
    <property type="entry name" value="PRK05477.1-4"/>
    <property type="match status" value="1"/>
</dbReference>
<dbReference type="NCBIfam" id="NF004015">
    <property type="entry name" value="PRK05477.1-5"/>
    <property type="match status" value="1"/>
</dbReference>
<dbReference type="PANTHER" id="PTHR11659">
    <property type="entry name" value="GLUTAMYL-TRNA GLN AMIDOTRANSFERASE SUBUNIT B MITOCHONDRIAL AND PROKARYOTIC PET112-RELATED"/>
    <property type="match status" value="1"/>
</dbReference>
<dbReference type="PANTHER" id="PTHR11659:SF0">
    <property type="entry name" value="GLUTAMYL-TRNA(GLN) AMIDOTRANSFERASE SUBUNIT B, MITOCHONDRIAL"/>
    <property type="match status" value="1"/>
</dbReference>
<dbReference type="Pfam" id="PF02934">
    <property type="entry name" value="GatB_N"/>
    <property type="match status" value="1"/>
</dbReference>
<dbReference type="Pfam" id="PF02637">
    <property type="entry name" value="GatB_Yqey"/>
    <property type="match status" value="1"/>
</dbReference>
<dbReference type="SMART" id="SM00845">
    <property type="entry name" value="GatB_Yqey"/>
    <property type="match status" value="1"/>
</dbReference>
<dbReference type="SUPFAM" id="SSF89095">
    <property type="entry name" value="GatB/YqeY motif"/>
    <property type="match status" value="1"/>
</dbReference>
<dbReference type="SUPFAM" id="SSF55931">
    <property type="entry name" value="Glutamine synthetase/guanido kinase"/>
    <property type="match status" value="1"/>
</dbReference>
<dbReference type="PROSITE" id="PS01234">
    <property type="entry name" value="GATB"/>
    <property type="match status" value="1"/>
</dbReference>
<protein>
    <recommendedName>
        <fullName evidence="1">Aspartyl/glutamyl-tRNA(Asn/Gln) amidotransferase subunit B</fullName>
        <shortName evidence="1">Asp/Glu-ADT subunit B</shortName>
        <ecNumber evidence="1">6.3.5.-</ecNumber>
    </recommendedName>
</protein>
<comment type="function">
    <text evidence="1">Allows the formation of correctly charged Asn-tRNA(Asn) or Gln-tRNA(Gln) through the transamidation of misacylated Asp-tRNA(Asn) or Glu-tRNA(Gln) in organisms which lack either or both of asparaginyl-tRNA or glutaminyl-tRNA synthetases. The reaction takes place in the presence of glutamine and ATP through an activated phospho-Asp-tRNA(Asn) or phospho-Glu-tRNA(Gln).</text>
</comment>
<comment type="catalytic activity">
    <reaction evidence="1">
        <text>L-glutamyl-tRNA(Gln) + L-glutamine + ATP + H2O = L-glutaminyl-tRNA(Gln) + L-glutamate + ADP + phosphate + H(+)</text>
        <dbReference type="Rhea" id="RHEA:17521"/>
        <dbReference type="Rhea" id="RHEA-COMP:9681"/>
        <dbReference type="Rhea" id="RHEA-COMP:9684"/>
        <dbReference type="ChEBI" id="CHEBI:15377"/>
        <dbReference type="ChEBI" id="CHEBI:15378"/>
        <dbReference type="ChEBI" id="CHEBI:29985"/>
        <dbReference type="ChEBI" id="CHEBI:30616"/>
        <dbReference type="ChEBI" id="CHEBI:43474"/>
        <dbReference type="ChEBI" id="CHEBI:58359"/>
        <dbReference type="ChEBI" id="CHEBI:78520"/>
        <dbReference type="ChEBI" id="CHEBI:78521"/>
        <dbReference type="ChEBI" id="CHEBI:456216"/>
    </reaction>
</comment>
<comment type="catalytic activity">
    <reaction evidence="1">
        <text>L-aspartyl-tRNA(Asn) + L-glutamine + ATP + H2O = L-asparaginyl-tRNA(Asn) + L-glutamate + ADP + phosphate + 2 H(+)</text>
        <dbReference type="Rhea" id="RHEA:14513"/>
        <dbReference type="Rhea" id="RHEA-COMP:9674"/>
        <dbReference type="Rhea" id="RHEA-COMP:9677"/>
        <dbReference type="ChEBI" id="CHEBI:15377"/>
        <dbReference type="ChEBI" id="CHEBI:15378"/>
        <dbReference type="ChEBI" id="CHEBI:29985"/>
        <dbReference type="ChEBI" id="CHEBI:30616"/>
        <dbReference type="ChEBI" id="CHEBI:43474"/>
        <dbReference type="ChEBI" id="CHEBI:58359"/>
        <dbReference type="ChEBI" id="CHEBI:78515"/>
        <dbReference type="ChEBI" id="CHEBI:78516"/>
        <dbReference type="ChEBI" id="CHEBI:456216"/>
    </reaction>
</comment>
<comment type="subunit">
    <text evidence="1">Heterotrimer of A, B and C subunits.</text>
</comment>
<comment type="similarity">
    <text evidence="1">Belongs to the GatB/GatE family. GatB subfamily.</text>
</comment>
<keyword id="KW-0067">ATP-binding</keyword>
<keyword id="KW-0436">Ligase</keyword>
<keyword id="KW-0547">Nucleotide-binding</keyword>
<keyword id="KW-0648">Protein biosynthesis</keyword>
<gene>
    <name evidence="1" type="primary">gatB</name>
    <name type="ordered locus">PFL_0893</name>
</gene>
<proteinExistence type="inferred from homology"/>
<organism>
    <name type="scientific">Pseudomonas fluorescens (strain ATCC BAA-477 / NRRL B-23932 / Pf-5)</name>
    <dbReference type="NCBI Taxonomy" id="220664"/>
    <lineage>
        <taxon>Bacteria</taxon>
        <taxon>Pseudomonadati</taxon>
        <taxon>Pseudomonadota</taxon>
        <taxon>Gammaproteobacteria</taxon>
        <taxon>Pseudomonadales</taxon>
        <taxon>Pseudomonadaceae</taxon>
        <taxon>Pseudomonas</taxon>
    </lineage>
</organism>
<evidence type="ECO:0000255" key="1">
    <source>
        <dbReference type="HAMAP-Rule" id="MF_00121"/>
    </source>
</evidence>
<feature type="chain" id="PRO_0000241257" description="Aspartyl/glutamyl-tRNA(Asn/Gln) amidotransferase subunit B">
    <location>
        <begin position="1"/>
        <end position="481"/>
    </location>
</feature>
<sequence length="481" mass="53016">MQWEVVIGLEIHTQLTTQSKIFSGSSTAFGAEPNTQASLIDLGMPGVLPVLNQEAVRMAVMFGLAVDAEIGQHNVFARKNYFYPDLPKGYQISQMELPIVGKGHLDIPLEDGTMKRVGITRAHLEEDAGKSLHEEFNGATGIDLNRAGTPLLEIVSEPDMRSAKEAVAYVKSIHALVRYLGICDGNMAEGSLRCDCNVSIRPKGQVEFGTRCEIKNVNSFRFIEKAINSEIRRQIELIEDGGKVIQQTRLYDPNKDETRPMRSKEEANDYRYFPDPDLLPVVIEDSFLDQVRATLPELPPQKRERFQEQFGLSVYDASVLATSREQADYFEKVASIAGDAKLAANWVMVELGSLLNKQGLEIDEAPVSAEQLGGMLLRIKDNTISGKIAKTVFEAMANGEGNADEIIDKRGLKQVTDSGAISAVLDEMLAANAEQVEQYRAADEAKRGKMFGFFVGQAMKASKGKANPQQVNELLKSKLEG</sequence>